<feature type="signal peptide" evidence="1">
    <location>
        <begin position="1"/>
        <end position="20"/>
    </location>
</feature>
<feature type="chain" id="PRO_5002169783" description="T cell receptor gamma variable 9" evidence="1">
    <location>
        <begin position="21"/>
        <end position="122"/>
    </location>
</feature>
<feature type="domain" description="Ig-like" evidence="2">
    <location>
        <begin position="27"/>
        <end position="122" status="greater than"/>
    </location>
</feature>
<feature type="disulfide bond" evidence="2">
    <location>
        <begin position="43"/>
        <end position="117"/>
    </location>
</feature>
<feature type="non-terminal residue">
    <location>
        <position position="122"/>
    </location>
</feature>
<gene>
    <name evidence="8" type="primary">TRGV9</name>
    <name evidence="10" type="synonym">TCRGV9</name>
</gene>
<dbReference type="EMBL" id="X07205">
    <property type="protein sequence ID" value="CAA30181.1"/>
    <property type="molecule type" value="Genomic_DNA"/>
</dbReference>
<dbReference type="EMBL" id="AC006033">
    <property type="status" value="NOT_ANNOTATED_CDS"/>
    <property type="molecule type" value="Genomic_DNA"/>
</dbReference>
<dbReference type="PDB" id="8JC0">
    <property type="method" value="EM"/>
    <property type="resolution" value="3.40 A"/>
    <property type="chains" value="n=20-121"/>
</dbReference>
<dbReference type="PDB" id="8WY0">
    <property type="method" value="EM"/>
    <property type="resolution" value="3.80 A"/>
    <property type="chains" value="n=20-121"/>
</dbReference>
<dbReference type="PDB" id="8WYI">
    <property type="method" value="EM"/>
    <property type="resolution" value="3.90 A"/>
    <property type="chains" value="n=20-121"/>
</dbReference>
<dbReference type="PDB" id="8YC0">
    <property type="method" value="EM"/>
    <property type="resolution" value="4.12 A"/>
    <property type="chains" value="n=20-121"/>
</dbReference>
<dbReference type="PDBsum" id="8JC0"/>
<dbReference type="PDBsum" id="8WY0"/>
<dbReference type="PDBsum" id="8WYI"/>
<dbReference type="PDBsum" id="8YC0"/>
<dbReference type="SMR" id="Q99603"/>
<dbReference type="FunCoup" id="Q99603">
    <property type="interactions" value="343"/>
</dbReference>
<dbReference type="IMGT_GENE-DB" id="TRGV9"/>
<dbReference type="BioMuta" id="TRGV9"/>
<dbReference type="Ensembl" id="ENST00000444775.2">
    <property type="protein sequence ID" value="ENSP00000391561.2"/>
    <property type="gene ID" value="ENSG00000211695.2"/>
</dbReference>
<dbReference type="UCSC" id="uc064cxv.1">
    <property type="organism name" value="human"/>
</dbReference>
<dbReference type="AGR" id="HGNC:12295"/>
<dbReference type="GeneCards" id="TRGV9"/>
<dbReference type="HGNC" id="HGNC:12295">
    <property type="gene designation" value="TRGV9"/>
</dbReference>
<dbReference type="HPA" id="ENSG00000211695">
    <property type="expression patterns" value="Tissue enhanced (placenta, prostate)"/>
</dbReference>
<dbReference type="neXtProt" id="NX_Q99603"/>
<dbReference type="OpenTargets" id="ENSG00000211695"/>
<dbReference type="VEuPathDB" id="HostDB:ENSG00000211695"/>
<dbReference type="GeneTree" id="ENSGT00940000153143"/>
<dbReference type="HOGENOM" id="CLU_077975_7_0_1"/>
<dbReference type="InParanoid" id="Q99603"/>
<dbReference type="OMA" id="YYCAFWE"/>
<dbReference type="OrthoDB" id="9616010at2759"/>
<dbReference type="PAN-GO" id="Q99603">
    <property type="GO annotations" value="1 GO annotation based on evolutionary models"/>
</dbReference>
<dbReference type="PhylomeDB" id="Q99603"/>
<dbReference type="SignaLink" id="Q99603"/>
<dbReference type="PRO" id="PR:Q99603"/>
<dbReference type="Proteomes" id="UP000005640">
    <property type="component" value="Chromosome 7"/>
</dbReference>
<dbReference type="RNAct" id="Q99603">
    <property type="molecule type" value="protein"/>
</dbReference>
<dbReference type="Bgee" id="ENSG00000211695">
    <property type="expression patterns" value="Expressed in male germ line stem cell (sensu Vertebrata) in testis and 47 other cell types or tissues"/>
</dbReference>
<dbReference type="GO" id="GO:0009897">
    <property type="term" value="C:external side of plasma membrane"/>
    <property type="evidence" value="ECO:0000318"/>
    <property type="project" value="GO_Central"/>
</dbReference>
<dbReference type="GO" id="GO:0005886">
    <property type="term" value="C:plasma membrane"/>
    <property type="evidence" value="ECO:0000303"/>
    <property type="project" value="UniProtKB"/>
</dbReference>
<dbReference type="GO" id="GO:0042101">
    <property type="term" value="C:T cell receptor complex"/>
    <property type="evidence" value="ECO:0007669"/>
    <property type="project" value="UniProtKB-KW"/>
</dbReference>
<dbReference type="GO" id="GO:0042287">
    <property type="term" value="F:MHC protein binding"/>
    <property type="evidence" value="ECO:0000303"/>
    <property type="project" value="UniProtKB"/>
</dbReference>
<dbReference type="GO" id="GO:0042605">
    <property type="term" value="F:peptide antigen binding"/>
    <property type="evidence" value="ECO:0000303"/>
    <property type="project" value="UniProtKB"/>
</dbReference>
<dbReference type="GO" id="GO:0002250">
    <property type="term" value="P:adaptive immune response"/>
    <property type="evidence" value="ECO:0007669"/>
    <property type="project" value="UniProtKB-KW"/>
</dbReference>
<dbReference type="GO" id="GO:0045087">
    <property type="term" value="P:innate immune response"/>
    <property type="evidence" value="ECO:0007669"/>
    <property type="project" value="UniProtKB-KW"/>
</dbReference>
<dbReference type="FunFam" id="2.60.40.10:FF:002626">
    <property type="entry name" value="T cell receptor gamma variable 2"/>
    <property type="match status" value="1"/>
</dbReference>
<dbReference type="Gene3D" id="2.60.40.10">
    <property type="entry name" value="Immunoglobulins"/>
    <property type="match status" value="1"/>
</dbReference>
<dbReference type="InterPro" id="IPR007110">
    <property type="entry name" value="Ig-like_dom"/>
</dbReference>
<dbReference type="InterPro" id="IPR036179">
    <property type="entry name" value="Ig-like_dom_sf"/>
</dbReference>
<dbReference type="InterPro" id="IPR013783">
    <property type="entry name" value="Ig-like_fold"/>
</dbReference>
<dbReference type="InterPro" id="IPR013106">
    <property type="entry name" value="Ig_V-set"/>
</dbReference>
<dbReference type="InterPro" id="IPR051117">
    <property type="entry name" value="TRG_var/const_region"/>
</dbReference>
<dbReference type="PANTHER" id="PTHR19256:SF44">
    <property type="entry name" value="T CELL RECEPTOR GAMMA VARIABLE 9"/>
    <property type="match status" value="1"/>
</dbReference>
<dbReference type="PANTHER" id="PTHR19256">
    <property type="entry name" value="T-CELL RECEPTOR GAMMA CHAIN"/>
    <property type="match status" value="1"/>
</dbReference>
<dbReference type="Pfam" id="PF07686">
    <property type="entry name" value="V-set"/>
    <property type="match status" value="1"/>
</dbReference>
<dbReference type="SMART" id="SM00406">
    <property type="entry name" value="IGv"/>
    <property type="match status" value="1"/>
</dbReference>
<dbReference type="SUPFAM" id="SSF48726">
    <property type="entry name" value="Immunoglobulin"/>
    <property type="match status" value="1"/>
</dbReference>
<dbReference type="PROSITE" id="PS50835">
    <property type="entry name" value="IG_LIKE"/>
    <property type="match status" value="1"/>
</dbReference>
<protein>
    <recommendedName>
        <fullName evidence="8">T cell receptor gamma variable 9</fullName>
    </recommendedName>
</protein>
<keyword id="KW-0002">3D-structure</keyword>
<keyword id="KW-1064">Adaptive immunity</keyword>
<keyword id="KW-1003">Cell membrane</keyword>
<keyword id="KW-1015">Disulfide bond</keyword>
<keyword id="KW-0391">Immunity</keyword>
<keyword id="KW-0393">Immunoglobulin domain</keyword>
<keyword id="KW-0399">Innate immunity</keyword>
<keyword id="KW-0472">Membrane</keyword>
<keyword id="KW-0675">Receptor</keyword>
<keyword id="KW-1185">Reference proteome</keyword>
<keyword id="KW-0732">Signal</keyword>
<keyword id="KW-1279">T cell receptor</keyword>
<evidence type="ECO:0000255" key="1"/>
<evidence type="ECO:0000255" key="2">
    <source>
        <dbReference type="PROSITE-ProRule" id="PRU00114"/>
    </source>
</evidence>
<evidence type="ECO:0000303" key="3">
    <source>
    </source>
</evidence>
<evidence type="ECO:0000303" key="4">
    <source>
    </source>
</evidence>
<evidence type="ECO:0000303" key="5">
    <source>
    </source>
</evidence>
<evidence type="ECO:0000303" key="6">
    <source>
    </source>
</evidence>
<evidence type="ECO:0000303" key="7">
    <source>
    </source>
</evidence>
<evidence type="ECO:0000303" key="8">
    <source ref="3"/>
</evidence>
<evidence type="ECO:0000305" key="9"/>
<evidence type="ECO:0000312" key="10">
    <source>
        <dbReference type="HGNC" id="HGNC:12295"/>
    </source>
</evidence>
<name>TRGV9_HUMAN</name>
<sequence>MLSLLHTSTLAVLGALCVYGAGHLEQPQISSTKTLSKTARLECVVSGITISATSVYWYRERPGEVIQFLVSISYDGTVRKESGIPSGKFEVDRIPETSTSTLTIHNVEKQDIATYYCALWEV</sequence>
<proteinExistence type="evidence at protein level"/>
<comment type="function">
    <text evidence="3 4 5 6 7">V region of the variable domain of T cell receptor (TR) gamma chain that participates in the antigen recognition (PubMed:24600447). Gamma-delta TRs recognize a variety of self and foreign non-peptide antigens frequently expressed at the epithelial boundaries between the host and external environment, including endogenous lipids presented by MH-like protein CD1D and phosphoantigens presented by butyrophilin-like molecule BTN3A1. Upon antigen recognition induces rapid, innate-like immune responses involved in pathogen clearance and tissue repair (PubMed:23348415, PubMed:28920588). Binding of gamma-delta TR complex to antigen triggers phosphorylation of immunoreceptor tyrosine-based activation motifs (ITAMs) in the CD3 chains by the LCK and FYN kinases, allowing the recruitment, phosphorylation, and activation of ZAP70 that facilitates phosphorylation of the scaffolding proteins LCP2 and LAT. This lead to the formation of a supramolecular signalosome that recruits the phospholipase PLCG1, resulting in calcium mobilization and ERK activation, ultimately leading to T cell expansion and differentiation into effector cells (PubMed:25674089). Gamma-delta TRs are produced through somatic rearrangement of a limited repertoire of variable (V), diversity (D), and joining (J) genes. The potential diversity of gamma-delta TRs is conferred by the unique ability to rearrange (D) genes in tandem and to utilize all three reading frames. The combinatorial diversity is considerably increased by the sequence exonuclease trimming and random nucleotide (N) region additions which occur during the V-(D)-J rearrangements (PubMed:24387714).</text>
</comment>
<comment type="subunit">
    <text evidence="6">Gamma-delta TR is a heterodimer composed of a gamma and delta chain; disulfide-linked. The gamma-delta TR is associated with the transmembrane signaling CD3 coreceptor proteins following the stoichiometry: a single gamma-delta TR heterodimer associates with one CD3D-CD3E heterodimer, one CD3G-CD3E heterodimer and one CD247 homodimer forming a stable octameric structure. Upon activation, gamma-delta TR complex associates with FCER1G to initiate intracellular signaling.</text>
</comment>
<comment type="subcellular location">
    <subcellularLocation>
        <location evidence="9">Cell membrane</location>
    </subcellularLocation>
</comment>
<comment type="polymorphism">
    <text evidence="9">There are several alleles. The sequence shown is that of IMGT allele TRGV9*01.</text>
</comment>
<organism>
    <name type="scientific">Homo sapiens</name>
    <name type="common">Human</name>
    <dbReference type="NCBI Taxonomy" id="9606"/>
    <lineage>
        <taxon>Eukaryota</taxon>
        <taxon>Metazoa</taxon>
        <taxon>Chordata</taxon>
        <taxon>Craniata</taxon>
        <taxon>Vertebrata</taxon>
        <taxon>Euteleostomi</taxon>
        <taxon>Mammalia</taxon>
        <taxon>Eutheria</taxon>
        <taxon>Euarchontoglires</taxon>
        <taxon>Primates</taxon>
        <taxon>Haplorrhini</taxon>
        <taxon>Catarrhini</taxon>
        <taxon>Hominidae</taxon>
        <taxon>Homo</taxon>
    </lineage>
</organism>
<reference key="1">
    <citation type="submission" date="1997-02" db="EMBL/GenBank/DDBJ databases">
        <authorList>
            <person name="Lefranc M.P."/>
        </authorList>
    </citation>
    <scope>NUCLEOTIDE SEQUENCE [GENOMIC DNA] (IMGT ALLELE TRGV9*01)</scope>
</reference>
<reference key="2">
    <citation type="journal article" date="2003" name="Nature">
        <title>The DNA sequence of human chromosome 7.</title>
        <authorList>
            <person name="Hillier L.W."/>
            <person name="Fulton R.S."/>
            <person name="Fulton L.A."/>
            <person name="Graves T.A."/>
            <person name="Pepin K.H."/>
            <person name="Wagner-McPherson C."/>
            <person name="Layman D."/>
            <person name="Maas J."/>
            <person name="Jaeger S."/>
            <person name="Walker R."/>
            <person name="Wylie K."/>
            <person name="Sekhon M."/>
            <person name="Becker M.C."/>
            <person name="O'Laughlin M.D."/>
            <person name="Schaller M.E."/>
            <person name="Fewell G.A."/>
            <person name="Delehaunty K.D."/>
            <person name="Miner T.L."/>
            <person name="Nash W.E."/>
            <person name="Cordes M."/>
            <person name="Du H."/>
            <person name="Sun H."/>
            <person name="Edwards J."/>
            <person name="Bradshaw-Cordum H."/>
            <person name="Ali J."/>
            <person name="Andrews S."/>
            <person name="Isak A."/>
            <person name="Vanbrunt A."/>
            <person name="Nguyen C."/>
            <person name="Du F."/>
            <person name="Lamar B."/>
            <person name="Courtney L."/>
            <person name="Kalicki J."/>
            <person name="Ozersky P."/>
            <person name="Bielicki L."/>
            <person name="Scott K."/>
            <person name="Holmes A."/>
            <person name="Harkins R."/>
            <person name="Harris A."/>
            <person name="Strong C.M."/>
            <person name="Hou S."/>
            <person name="Tomlinson C."/>
            <person name="Dauphin-Kohlberg S."/>
            <person name="Kozlowicz-Reilly A."/>
            <person name="Leonard S."/>
            <person name="Rohlfing T."/>
            <person name="Rock S.M."/>
            <person name="Tin-Wollam A.-M."/>
            <person name="Abbott A."/>
            <person name="Minx P."/>
            <person name="Maupin R."/>
            <person name="Strowmatt C."/>
            <person name="Latreille P."/>
            <person name="Miller N."/>
            <person name="Johnson D."/>
            <person name="Murray J."/>
            <person name="Woessner J.P."/>
            <person name="Wendl M.C."/>
            <person name="Yang S.-P."/>
            <person name="Schultz B.R."/>
            <person name="Wallis J.W."/>
            <person name="Spieth J."/>
            <person name="Bieri T.A."/>
            <person name="Nelson J.O."/>
            <person name="Berkowicz N."/>
            <person name="Wohldmann P.E."/>
            <person name="Cook L.L."/>
            <person name="Hickenbotham M.T."/>
            <person name="Eldred J."/>
            <person name="Williams D."/>
            <person name="Bedell J.A."/>
            <person name="Mardis E.R."/>
            <person name="Clifton S.W."/>
            <person name="Chissoe S.L."/>
            <person name="Marra M.A."/>
            <person name="Raymond C."/>
            <person name="Haugen E."/>
            <person name="Gillett W."/>
            <person name="Zhou Y."/>
            <person name="James R."/>
            <person name="Phelps K."/>
            <person name="Iadanoto S."/>
            <person name="Bubb K."/>
            <person name="Simms E."/>
            <person name="Levy R."/>
            <person name="Clendenning J."/>
            <person name="Kaul R."/>
            <person name="Kent W.J."/>
            <person name="Furey T.S."/>
            <person name="Baertsch R.A."/>
            <person name="Brent M.R."/>
            <person name="Keibler E."/>
            <person name="Flicek P."/>
            <person name="Bork P."/>
            <person name="Suyama M."/>
            <person name="Bailey J.A."/>
            <person name="Portnoy M.E."/>
            <person name="Torrents D."/>
            <person name="Chinwalla A.T."/>
            <person name="Gish W.R."/>
            <person name="Eddy S.R."/>
            <person name="McPherson J.D."/>
            <person name="Olson M.V."/>
            <person name="Eichler E.E."/>
            <person name="Green E.D."/>
            <person name="Waterston R.H."/>
            <person name="Wilson R.K."/>
        </authorList>
    </citation>
    <scope>NUCLEOTIDE SEQUENCE [LARGE SCALE GENOMIC DNA] (IMGT ALLELE TRGV9*01)</scope>
</reference>
<reference key="3">
    <citation type="book" date="2001" name="The T Cell Receptor FactsBook.">
        <title>The T Cell Receptor FactsBook.</title>
        <editorList>
            <person name="Lefranc M.P."/>
            <person name="Lefranc G."/>
        </editorList>
        <authorList>
            <person name="Lefranc M.P."/>
            <person name="Lefranc G."/>
        </authorList>
    </citation>
    <scope>NOMENCLATURE</scope>
</reference>
<reference key="4">
    <citation type="journal article" date="2013" name="Nat. Rev. Immunol.">
        <title>Six-of-the-best: unique contributions of gammadelta T cells to immunology.</title>
        <authorList>
            <person name="Vantourout P."/>
            <person name="Hayday A."/>
        </authorList>
    </citation>
    <scope>REVIEW ON FUNCTION AND ANTIGEN RECOGNITION</scope>
</reference>
<reference key="5">
    <citation type="journal article" date="2014" name="Annu. Rev. Immunol.">
        <title>gammadelta T cells: first line of defense and beyond.</title>
        <authorList>
            <person name="Chien Y.H."/>
            <person name="Meyer C."/>
            <person name="Bonneville M."/>
        </authorList>
    </citation>
    <scope>REVIEW ON GAMMA DELTA T CELL RECEPTOR DIVERSITY</scope>
</reference>
<reference key="6">
    <citation type="journal article" date="2014" name="Front. Immunol.">
        <title>Immunoglobulin and T Cell Receptor Genes: IMGT((R)) and the Birth and Rise of Immunoinformatics.</title>
        <authorList>
            <person name="Lefranc M.P."/>
        </authorList>
    </citation>
    <scope>NOMENCLATURE</scope>
</reference>
<reference key="7">
    <citation type="journal article" date="2015" name="Front. Immunol.">
        <title>Five Layers of Receptor Signaling in gammadelta T-Cell Differentiation and Activation.</title>
        <authorList>
            <person name="Ribeiro S.T."/>
            <person name="Ribot J.C."/>
            <person name="Silva-Santos B."/>
        </authorList>
    </citation>
    <scope>REVIEW ON T CELL RECEPTOR SIGNALING</scope>
    <scope>SUBUNIT</scope>
</reference>
<reference key="8">
    <citation type="journal article" date="2017" name="Nat. Rev. Immunol.">
        <title>gammadelta T cells in homeostasis and host defence of epithelial barrier tissues.</title>
        <authorList>
            <person name="Nielsen M.M."/>
            <person name="Witherden D.A."/>
            <person name="Havran W.L."/>
        </authorList>
    </citation>
    <scope>REVIEW ON FUNCTION</scope>
</reference>
<accession>Q99603</accession>